<name>RER1_BOVIN</name>
<sequence length="196" mass="22863">MSEGDSVGDSVHGKPSVVYRFFTRLGQIYQSWLDKSTPHTAVRWVVTLGLSFIYMIRVYLLQGWYIVTYALGIYHLNLFIAFLSPKVDPSLMEDSDDGPSLPTKQNEEFRPFIRRLPEFKFWHAATKGILVAMVCTFFEAFNVPVFWPILVMYFIMLFCITMKRQIKHMIKYRYIPFTHGKRTYKGKEDAGKAFAS</sequence>
<evidence type="ECO:0000250" key="1"/>
<evidence type="ECO:0000250" key="2">
    <source>
        <dbReference type="UniProtKB" id="O15258"/>
    </source>
</evidence>
<evidence type="ECO:0000255" key="3"/>
<evidence type="ECO:0000305" key="4"/>
<accession>A5PJ65</accession>
<accession>A8E4P6</accession>
<proteinExistence type="evidence at transcript level"/>
<organism>
    <name type="scientific">Bos taurus</name>
    <name type="common">Bovine</name>
    <dbReference type="NCBI Taxonomy" id="9913"/>
    <lineage>
        <taxon>Eukaryota</taxon>
        <taxon>Metazoa</taxon>
        <taxon>Chordata</taxon>
        <taxon>Craniata</taxon>
        <taxon>Vertebrata</taxon>
        <taxon>Euteleostomi</taxon>
        <taxon>Mammalia</taxon>
        <taxon>Eutheria</taxon>
        <taxon>Laurasiatheria</taxon>
        <taxon>Artiodactyla</taxon>
        <taxon>Ruminantia</taxon>
        <taxon>Pecora</taxon>
        <taxon>Bovidae</taxon>
        <taxon>Bovinae</taxon>
        <taxon>Bos</taxon>
    </lineage>
</organism>
<gene>
    <name type="primary">RER1</name>
</gene>
<feature type="initiator methionine" description="Removed" evidence="2">
    <location>
        <position position="1"/>
    </location>
</feature>
<feature type="chain" id="PRO_0000327753" description="Protein RER1">
    <location>
        <begin position="2"/>
        <end position="196"/>
    </location>
</feature>
<feature type="transmembrane region" description="Helical" evidence="3">
    <location>
        <begin position="41"/>
        <end position="61"/>
    </location>
</feature>
<feature type="transmembrane region" description="Helical" evidence="3">
    <location>
        <begin position="63"/>
        <end position="83"/>
    </location>
</feature>
<feature type="transmembrane region" description="Helical" evidence="3">
    <location>
        <begin position="140"/>
        <end position="160"/>
    </location>
</feature>
<feature type="modified residue" description="N-acetylserine" evidence="2">
    <location>
        <position position="2"/>
    </location>
</feature>
<feature type="modified residue" description="Phosphoserine" evidence="2">
    <location>
        <position position="2"/>
    </location>
</feature>
<feature type="modified residue" description="Phosphoserine" evidence="2">
    <location>
        <position position="6"/>
    </location>
</feature>
<feature type="modified residue" description="Phosphoserine" evidence="2">
    <location>
        <position position="10"/>
    </location>
</feature>
<feature type="modified residue" description="Phosphoserine" evidence="2">
    <location>
        <position position="95"/>
    </location>
</feature>
<feature type="sequence conflict" description="In Ref. 1; AAI41982." evidence="4" ref="1">
    <original>A</original>
    <variation>T</variation>
    <location>
        <position position="193"/>
    </location>
</feature>
<keyword id="KW-0007">Acetylation</keyword>
<keyword id="KW-0333">Golgi apparatus</keyword>
<keyword id="KW-0472">Membrane</keyword>
<keyword id="KW-0597">Phosphoprotein</keyword>
<keyword id="KW-1185">Reference proteome</keyword>
<keyword id="KW-0812">Transmembrane</keyword>
<keyword id="KW-1133">Transmembrane helix</keyword>
<comment type="function">
    <text evidence="1">Involved in the retrieval of endoplasmic reticulum membrane proteins from the early Golgi compartment.</text>
</comment>
<comment type="subcellular location">
    <subcellularLocation>
        <location>Golgi apparatus membrane</location>
        <topology>Multi-pass membrane protein</topology>
    </subcellularLocation>
</comment>
<comment type="similarity">
    <text evidence="4">Belongs to the RER1 family.</text>
</comment>
<protein>
    <recommendedName>
        <fullName>Protein RER1</fullName>
    </recommendedName>
</protein>
<dbReference type="EMBL" id="BC141981">
    <property type="protein sequence ID" value="AAI41982.1"/>
    <property type="molecule type" value="mRNA"/>
</dbReference>
<dbReference type="EMBL" id="BC151447">
    <property type="protein sequence ID" value="AAI51448.1"/>
    <property type="molecule type" value="mRNA"/>
</dbReference>
<dbReference type="RefSeq" id="NP_001098962.1">
    <property type="nucleotide sequence ID" value="NM_001105492.1"/>
</dbReference>
<dbReference type="FunCoup" id="A5PJ65">
    <property type="interactions" value="4011"/>
</dbReference>
<dbReference type="STRING" id="9913.ENSBTAP00000012259"/>
<dbReference type="PaxDb" id="9913-ENSBTAP00000012259"/>
<dbReference type="PeptideAtlas" id="A5PJ65"/>
<dbReference type="GeneID" id="100125922"/>
<dbReference type="KEGG" id="bta:100125922"/>
<dbReference type="CTD" id="11079"/>
<dbReference type="eggNOG" id="KOG1688">
    <property type="taxonomic scope" value="Eukaryota"/>
</dbReference>
<dbReference type="HOGENOM" id="CLU_074889_2_0_1"/>
<dbReference type="InParanoid" id="A5PJ65"/>
<dbReference type="OrthoDB" id="448250at2759"/>
<dbReference type="TreeFam" id="TF300029"/>
<dbReference type="Proteomes" id="UP000009136">
    <property type="component" value="Unplaced"/>
</dbReference>
<dbReference type="GO" id="GO:0005783">
    <property type="term" value="C:endoplasmic reticulum"/>
    <property type="evidence" value="ECO:0007669"/>
    <property type="project" value="GOC"/>
</dbReference>
<dbReference type="GO" id="GO:0000139">
    <property type="term" value="C:Golgi membrane"/>
    <property type="evidence" value="ECO:0000318"/>
    <property type="project" value="GO_Central"/>
</dbReference>
<dbReference type="GO" id="GO:0006621">
    <property type="term" value="P:protein retention in ER lumen"/>
    <property type="evidence" value="ECO:0000318"/>
    <property type="project" value="GO_Central"/>
</dbReference>
<dbReference type="GO" id="GO:0006890">
    <property type="term" value="P:retrograde vesicle-mediated transport, Golgi to endoplasmic reticulum"/>
    <property type="evidence" value="ECO:0000318"/>
    <property type="project" value="GO_Central"/>
</dbReference>
<dbReference type="InterPro" id="IPR004932">
    <property type="entry name" value="Rer1"/>
</dbReference>
<dbReference type="PANTHER" id="PTHR10743">
    <property type="entry name" value="PROTEIN RER1"/>
    <property type="match status" value="1"/>
</dbReference>
<dbReference type="PANTHER" id="PTHR10743:SF0">
    <property type="entry name" value="PROTEIN RER1"/>
    <property type="match status" value="1"/>
</dbReference>
<dbReference type="Pfam" id="PF03248">
    <property type="entry name" value="Rer1"/>
    <property type="match status" value="1"/>
</dbReference>
<dbReference type="PIRSF" id="PIRSF016013">
    <property type="entry name" value="AtER_Rer1p"/>
    <property type="match status" value="1"/>
</dbReference>
<reference key="1">
    <citation type="submission" date="2007-07" db="EMBL/GenBank/DDBJ databases">
        <authorList>
            <consortium name="NIH - Mammalian Gene Collection (MGC) project"/>
        </authorList>
    </citation>
    <scope>NUCLEOTIDE SEQUENCE [LARGE SCALE MRNA]</scope>
    <source>
        <strain>Hereford</strain>
        <tissue>Fetal pons</tissue>
        <tissue>Placenta</tissue>
    </source>
</reference>